<organism>
    <name type="scientific">Drosophila pseudoobscura pseudoobscura</name>
    <name type="common">Fruit fly</name>
    <dbReference type="NCBI Taxonomy" id="46245"/>
    <lineage>
        <taxon>Eukaryota</taxon>
        <taxon>Metazoa</taxon>
        <taxon>Ecdysozoa</taxon>
        <taxon>Arthropoda</taxon>
        <taxon>Hexapoda</taxon>
        <taxon>Insecta</taxon>
        <taxon>Pterygota</taxon>
        <taxon>Neoptera</taxon>
        <taxon>Endopterygota</taxon>
        <taxon>Diptera</taxon>
        <taxon>Brachycera</taxon>
        <taxon>Muscomorpha</taxon>
        <taxon>Ephydroidea</taxon>
        <taxon>Drosophilidae</taxon>
        <taxon>Drosophila</taxon>
        <taxon>Sophophora</taxon>
    </lineage>
</organism>
<feature type="chain" id="PRO_0000369208" description="Adenylyltransferase and sulfurtransferase MOCS3-2">
    <location>
        <begin position="1"/>
        <end position="451"/>
    </location>
</feature>
<feature type="domain" description="Rhodanese" evidence="2">
    <location>
        <begin position="353"/>
        <end position="449"/>
    </location>
</feature>
<feature type="region of interest" description="Disordered" evidence="3">
    <location>
        <begin position="42"/>
        <end position="62"/>
    </location>
</feature>
<feature type="compositionally biased region" description="Acidic residues" evidence="3">
    <location>
        <begin position="43"/>
        <end position="52"/>
    </location>
</feature>
<feature type="active site" description="Glycyl thioester intermediate; for adenylyltransferase activity" evidence="2">
    <location>
        <position position="246"/>
    </location>
</feature>
<feature type="active site" description="Cysteine persulfide intermediate; for sulfurtransferase activity" evidence="2">
    <location>
        <position position="408"/>
    </location>
</feature>
<feature type="binding site" evidence="2">
    <location>
        <position position="99"/>
    </location>
    <ligand>
        <name>ATP</name>
        <dbReference type="ChEBI" id="CHEBI:30616"/>
    </ligand>
</feature>
<feature type="binding site" evidence="2">
    <location>
        <position position="120"/>
    </location>
    <ligand>
        <name>ATP</name>
        <dbReference type="ChEBI" id="CHEBI:30616"/>
    </ligand>
</feature>
<feature type="binding site" evidence="2">
    <location>
        <begin position="127"/>
        <end position="131"/>
    </location>
    <ligand>
        <name>ATP</name>
        <dbReference type="ChEBI" id="CHEBI:30616"/>
    </ligand>
</feature>
<feature type="binding site" evidence="2">
    <location>
        <position position="144"/>
    </location>
    <ligand>
        <name>ATP</name>
        <dbReference type="ChEBI" id="CHEBI:30616"/>
    </ligand>
</feature>
<feature type="binding site" evidence="2">
    <location>
        <begin position="188"/>
        <end position="189"/>
    </location>
    <ligand>
        <name>ATP</name>
        <dbReference type="ChEBI" id="CHEBI:30616"/>
    </ligand>
</feature>
<feature type="binding site" evidence="2">
    <location>
        <position position="229"/>
    </location>
    <ligand>
        <name>Zn(2+)</name>
        <dbReference type="ChEBI" id="CHEBI:29105"/>
    </ligand>
</feature>
<feature type="binding site" evidence="2">
    <location>
        <position position="232"/>
    </location>
    <ligand>
        <name>Zn(2+)</name>
        <dbReference type="ChEBI" id="CHEBI:29105"/>
    </ligand>
</feature>
<feature type="binding site" evidence="2">
    <location>
        <position position="304"/>
    </location>
    <ligand>
        <name>Zn(2+)</name>
        <dbReference type="ChEBI" id="CHEBI:29105"/>
    </ligand>
</feature>
<feature type="binding site" evidence="2">
    <location>
        <position position="307"/>
    </location>
    <ligand>
        <name>Zn(2+)</name>
        <dbReference type="ChEBI" id="CHEBI:29105"/>
    </ligand>
</feature>
<feature type="modified residue" description="Phosphothreonine" evidence="1">
    <location>
        <position position="60"/>
    </location>
</feature>
<reference key="1">
    <citation type="journal article" date="2005" name="Genome Res.">
        <title>Comparative genome sequencing of Drosophila pseudoobscura: chromosomal, gene, and cis-element evolution.</title>
        <authorList>
            <person name="Richards S."/>
            <person name="Liu Y."/>
            <person name="Bettencourt B.R."/>
            <person name="Hradecky P."/>
            <person name="Letovsky S."/>
            <person name="Nielsen R."/>
            <person name="Thornton K."/>
            <person name="Hubisz M.J."/>
            <person name="Chen R."/>
            <person name="Meisel R.P."/>
            <person name="Couronne O."/>
            <person name="Hua S."/>
            <person name="Smith M.A."/>
            <person name="Zhang P."/>
            <person name="Liu J."/>
            <person name="Bussemaker H.J."/>
            <person name="van Batenburg M.F."/>
            <person name="Howells S.L."/>
            <person name="Scherer S.E."/>
            <person name="Sodergren E."/>
            <person name="Matthews B.B."/>
            <person name="Crosby M.A."/>
            <person name="Schroeder A.J."/>
            <person name="Ortiz-Barrientos D."/>
            <person name="Rives C.M."/>
            <person name="Metzker M.L."/>
            <person name="Muzny D.M."/>
            <person name="Scott G."/>
            <person name="Steffen D."/>
            <person name="Wheeler D.A."/>
            <person name="Worley K.C."/>
            <person name="Havlak P."/>
            <person name="Durbin K.J."/>
            <person name="Egan A."/>
            <person name="Gill R."/>
            <person name="Hume J."/>
            <person name="Morgan M.B."/>
            <person name="Miner G."/>
            <person name="Hamilton C."/>
            <person name="Huang Y."/>
            <person name="Waldron L."/>
            <person name="Verduzco D."/>
            <person name="Clerc-Blankenburg K.P."/>
            <person name="Dubchak I."/>
            <person name="Noor M.A.F."/>
            <person name="Anderson W."/>
            <person name="White K.P."/>
            <person name="Clark A.G."/>
            <person name="Schaeffer S.W."/>
            <person name="Gelbart W.M."/>
            <person name="Weinstock G.M."/>
            <person name="Gibbs R.A."/>
        </authorList>
    </citation>
    <scope>NUCLEOTIDE SEQUENCE [LARGE SCALE GENOMIC DNA]</scope>
    <source>
        <strain>MV2-25 / Tucson 14011-0121.94</strain>
    </source>
</reference>
<sequence length="451" mass="50086">MIDSEALESERVKLKRDIADLRANLNRKEQCLRELEAAIAAGEDSDEAEESSNDMPTPQTKLTNDDIARYSRQLILQDFGVQGQLKLKNSSVLIVGMGGLGCPAAQYLVAAGCGHLGLIDYDEVERSNLHRQILHSEHRCGMSKAESARIALLELNSHCQIRCHSRLINSMNAMHIIRPYDVVLDCSDNVATRYLLNDACVMLRKPLVSGSALKMDGQLTVYGYGQGPCYRCIYPVPPPPEAVTNCGDGGVLGAVTGIIGAMQALEAIKVIIGLGDVMSGRLLIFDGSSFMFRNIRIRTKRPNCHVCSAQPLITELIDYEMFCGMHATDKDNPLDLLEPDQRLEVKEYHQKLQSQPHLLLDVRPPAEFEICQLPRSINVPLSEILDDSYLKRFAKQLEDKELPIVLLCRRGNDSQIAVQHITNRFPAHSIRDLVGGLHAWTGSVDATFPIY</sequence>
<keyword id="KW-0067">ATP-binding</keyword>
<keyword id="KW-0963">Cytoplasm</keyword>
<keyword id="KW-0479">Metal-binding</keyword>
<keyword id="KW-0501">Molybdenum cofactor biosynthesis</keyword>
<keyword id="KW-0511">Multifunctional enzyme</keyword>
<keyword id="KW-0547">Nucleotide-binding</keyword>
<keyword id="KW-0597">Phosphoprotein</keyword>
<keyword id="KW-1185">Reference proteome</keyword>
<keyword id="KW-0808">Transferase</keyword>
<keyword id="KW-0819">tRNA processing</keyword>
<keyword id="KW-0862">Zinc</keyword>
<comment type="function">
    <text evidence="2">Plays a central role in 2-thiolation of mcm(5)S(2)U at tRNA wobble positions of cytosolic tRNA(Lys), tRNA(Glu) and tRNA(Gln). Also essential during biosynthesis of the molybdenum cofactor. Acts by mediating the C-terminal thiocarboxylation of sulfur carriers URM1 and MOCS2A. Its N-terminus first activates URM1 and MOCS2A as acyl-adenylates (-COAMP), then the persulfide sulfur on the catalytic cysteine is transferred to URM1 and MOCS2A to form thiocarboxylation (-COSH) of their C-terminus. The reaction probably involves hydrogen sulfide that is generated from the persulfide intermediate and that acts as a nucleophile towards URM1 and MOCS2A. Subsequently, a transient disulfide bond is formed. Does not use thiosulfate as sulfur donor; NFS1 probably acting as a sulfur donor for thiocarboxylation reactions.</text>
</comment>
<comment type="catalytic activity">
    <reaction evidence="2">
        <text>[molybdopterin-synthase sulfur-carrier protein]-C-terminal Gly-Gly + ATP + H(+) = [molybdopterin-synthase sulfur-carrier protein]-C-terminal Gly-Gly-AMP + diphosphate</text>
        <dbReference type="Rhea" id="RHEA:43616"/>
        <dbReference type="Rhea" id="RHEA-COMP:12159"/>
        <dbReference type="Rhea" id="RHEA-COMP:12202"/>
        <dbReference type="ChEBI" id="CHEBI:15378"/>
        <dbReference type="ChEBI" id="CHEBI:30616"/>
        <dbReference type="ChEBI" id="CHEBI:33019"/>
        <dbReference type="ChEBI" id="CHEBI:90618"/>
        <dbReference type="ChEBI" id="CHEBI:90778"/>
        <dbReference type="EC" id="2.7.7.80"/>
    </reaction>
</comment>
<comment type="catalytic activity">
    <reaction evidence="2">
        <text>[molybdopterin-synthase sulfur-carrier protein]-C-terminal Gly-Gly-AMP + S-sulfanyl-L-cysteinyl-[cysteine desulfurase] + AH2 = [molybdopterin-synthase sulfur-carrier protein]-C-terminal-Gly-aminoethanethioate + L-cysteinyl-[cysteine desulfurase] + A + AMP + 2 H(+)</text>
        <dbReference type="Rhea" id="RHEA:48612"/>
        <dbReference type="Rhea" id="RHEA-COMP:12157"/>
        <dbReference type="Rhea" id="RHEA-COMP:12158"/>
        <dbReference type="Rhea" id="RHEA-COMP:12159"/>
        <dbReference type="Rhea" id="RHEA-COMP:19907"/>
        <dbReference type="ChEBI" id="CHEBI:13193"/>
        <dbReference type="ChEBI" id="CHEBI:15378"/>
        <dbReference type="ChEBI" id="CHEBI:17499"/>
        <dbReference type="ChEBI" id="CHEBI:29950"/>
        <dbReference type="ChEBI" id="CHEBI:61963"/>
        <dbReference type="ChEBI" id="CHEBI:90618"/>
        <dbReference type="ChEBI" id="CHEBI:232372"/>
        <dbReference type="ChEBI" id="CHEBI:456215"/>
        <dbReference type="EC" id="2.8.1.11"/>
    </reaction>
</comment>
<comment type="cofactor">
    <cofactor evidence="2">
        <name>Zn(2+)</name>
        <dbReference type="ChEBI" id="CHEBI:29105"/>
    </cofactor>
    <text evidence="2">Binds 1 zinc ion per subunit.</text>
</comment>
<comment type="pathway">
    <text evidence="2">tRNA modification; 5-methoxycarbonylmethyl-2-thiouridine-tRNA biosynthesis.</text>
</comment>
<comment type="pathway">
    <text evidence="2">Cofactor biosynthesis; molybdopterin biosynthesis.</text>
</comment>
<comment type="subcellular location">
    <subcellularLocation>
        <location evidence="2">Cytoplasm</location>
    </subcellularLocation>
</comment>
<comment type="similarity">
    <text evidence="2">In the N-terminal section; belongs to the HesA/MoeB/ThiF family. UBA4 subfamily.</text>
</comment>
<dbReference type="EC" id="2.7.7.80" evidence="2"/>
<dbReference type="EC" id="2.8.1.11" evidence="2"/>
<dbReference type="EMBL" id="CH379058">
    <property type="protein sequence ID" value="EAL34328.1"/>
    <property type="molecule type" value="Genomic_DNA"/>
</dbReference>
<dbReference type="RefSeq" id="XP_001357259.1">
    <property type="nucleotide sequence ID" value="XM_001357223.3"/>
</dbReference>
<dbReference type="SMR" id="Q29PG5"/>
<dbReference type="FunCoup" id="Q29PG5">
    <property type="interactions" value="429"/>
</dbReference>
<dbReference type="STRING" id="46245.Q29PG5"/>
<dbReference type="EnsemblMetazoa" id="FBtr0280683">
    <property type="protein sequence ID" value="FBpp0279121"/>
    <property type="gene ID" value="FBgn0072089"/>
</dbReference>
<dbReference type="KEGG" id="dpo:4817985"/>
<dbReference type="CTD" id="34187"/>
<dbReference type="eggNOG" id="KOG2017">
    <property type="taxonomic scope" value="Eukaryota"/>
</dbReference>
<dbReference type="HOGENOM" id="CLU_013325_1_2_1"/>
<dbReference type="InParanoid" id="Q29PG5"/>
<dbReference type="OMA" id="IPDVGMD"/>
<dbReference type="PhylomeDB" id="Q29PG5"/>
<dbReference type="UniPathway" id="UPA00344"/>
<dbReference type="UniPathway" id="UPA00988"/>
<dbReference type="Proteomes" id="UP000001819">
    <property type="component" value="Chromosome 4"/>
</dbReference>
<dbReference type="Bgee" id="FBgn0072089">
    <property type="expression patterns" value="Expressed in adult organism"/>
</dbReference>
<dbReference type="GO" id="GO:0005829">
    <property type="term" value="C:cytosol"/>
    <property type="evidence" value="ECO:0000250"/>
    <property type="project" value="UniProtKB"/>
</dbReference>
<dbReference type="GO" id="GO:0005524">
    <property type="term" value="F:ATP binding"/>
    <property type="evidence" value="ECO:0007669"/>
    <property type="project" value="UniProtKB-KW"/>
</dbReference>
<dbReference type="GO" id="GO:0046872">
    <property type="term" value="F:metal ion binding"/>
    <property type="evidence" value="ECO:0007669"/>
    <property type="project" value="UniProtKB-KW"/>
</dbReference>
<dbReference type="GO" id="GO:0061605">
    <property type="term" value="F:molybdopterin-synthase adenylyltransferase activity"/>
    <property type="evidence" value="ECO:0007669"/>
    <property type="project" value="UniProtKB-EC"/>
</dbReference>
<dbReference type="GO" id="GO:0061604">
    <property type="term" value="F:molybdopterin-synthase sulfurtransferase activity"/>
    <property type="evidence" value="ECO:0000250"/>
    <property type="project" value="UniProtKB"/>
</dbReference>
<dbReference type="GO" id="GO:0004792">
    <property type="term" value="F:thiosulfate-cyanide sulfurtransferase activity"/>
    <property type="evidence" value="ECO:0007669"/>
    <property type="project" value="TreeGrafter"/>
</dbReference>
<dbReference type="GO" id="GO:0042292">
    <property type="term" value="F:URM1 activating enzyme activity"/>
    <property type="evidence" value="ECO:0007669"/>
    <property type="project" value="TreeGrafter"/>
</dbReference>
<dbReference type="GO" id="GO:0006777">
    <property type="term" value="P:Mo-molybdopterin cofactor biosynthetic process"/>
    <property type="evidence" value="ECO:0000250"/>
    <property type="project" value="UniProtKB"/>
</dbReference>
<dbReference type="GO" id="GO:0032447">
    <property type="term" value="P:protein urmylation"/>
    <property type="evidence" value="ECO:0007669"/>
    <property type="project" value="TreeGrafter"/>
</dbReference>
<dbReference type="GO" id="GO:0002143">
    <property type="term" value="P:tRNA wobble position uridine thiolation"/>
    <property type="evidence" value="ECO:0007669"/>
    <property type="project" value="InterPro"/>
</dbReference>
<dbReference type="CDD" id="cd00757">
    <property type="entry name" value="ThiF_MoeB_HesA_family"/>
    <property type="match status" value="1"/>
</dbReference>
<dbReference type="FunFam" id="3.40.250.10:FF:000014">
    <property type="entry name" value="Adenylyltransferase and sulfurtransferase MOCS3"/>
    <property type="match status" value="1"/>
</dbReference>
<dbReference type="FunFam" id="3.40.50.720:FF:000206">
    <property type="entry name" value="Adenylyltransferase and sulfurtransferase MOCS3"/>
    <property type="match status" value="1"/>
</dbReference>
<dbReference type="Gene3D" id="3.40.50.720">
    <property type="entry name" value="NAD(P)-binding Rossmann-like Domain"/>
    <property type="match status" value="1"/>
</dbReference>
<dbReference type="Gene3D" id="3.40.250.10">
    <property type="entry name" value="Rhodanese-like domain"/>
    <property type="match status" value="1"/>
</dbReference>
<dbReference type="HAMAP" id="MF_03049">
    <property type="entry name" value="MOCS3_Uba4"/>
    <property type="match status" value="1"/>
</dbReference>
<dbReference type="InterPro" id="IPR028885">
    <property type="entry name" value="MOCS3/Uba4"/>
</dbReference>
<dbReference type="InterPro" id="IPR001763">
    <property type="entry name" value="Rhodanese-like_dom"/>
</dbReference>
<dbReference type="InterPro" id="IPR036873">
    <property type="entry name" value="Rhodanese-like_dom_sf"/>
</dbReference>
<dbReference type="InterPro" id="IPR045886">
    <property type="entry name" value="ThiF/MoeB/HesA"/>
</dbReference>
<dbReference type="InterPro" id="IPR000594">
    <property type="entry name" value="ThiF_NAD_FAD-bd"/>
</dbReference>
<dbReference type="InterPro" id="IPR035985">
    <property type="entry name" value="Ubiquitin-activating_enz"/>
</dbReference>
<dbReference type="NCBIfam" id="NF004281">
    <property type="entry name" value="PRK05690.1"/>
    <property type="match status" value="1"/>
</dbReference>
<dbReference type="PANTHER" id="PTHR10953:SF102">
    <property type="entry name" value="ADENYLYLTRANSFERASE AND SULFURTRANSFERASE MOCS3"/>
    <property type="match status" value="1"/>
</dbReference>
<dbReference type="PANTHER" id="PTHR10953">
    <property type="entry name" value="UBIQUITIN-ACTIVATING ENZYME E1"/>
    <property type="match status" value="1"/>
</dbReference>
<dbReference type="Pfam" id="PF00581">
    <property type="entry name" value="Rhodanese"/>
    <property type="match status" value="1"/>
</dbReference>
<dbReference type="Pfam" id="PF00899">
    <property type="entry name" value="ThiF"/>
    <property type="match status" value="1"/>
</dbReference>
<dbReference type="SMART" id="SM00450">
    <property type="entry name" value="RHOD"/>
    <property type="match status" value="1"/>
</dbReference>
<dbReference type="SUPFAM" id="SSF69572">
    <property type="entry name" value="Activating enzymes of the ubiquitin-like proteins"/>
    <property type="match status" value="1"/>
</dbReference>
<dbReference type="PROSITE" id="PS50206">
    <property type="entry name" value="RHODANESE_3"/>
    <property type="match status" value="1"/>
</dbReference>
<name>MOC32_DROPS</name>
<proteinExistence type="inferred from homology"/>
<evidence type="ECO:0000250" key="1"/>
<evidence type="ECO:0000255" key="2">
    <source>
        <dbReference type="HAMAP-Rule" id="MF_03049"/>
    </source>
</evidence>
<evidence type="ECO:0000256" key="3">
    <source>
        <dbReference type="SAM" id="MobiDB-lite"/>
    </source>
</evidence>
<protein>
    <recommendedName>
        <fullName evidence="2">Adenylyltransferase and sulfurtransferase MOCS3-2</fullName>
    </recommendedName>
    <alternativeName>
        <fullName evidence="2">Molybdenum cofactor synthesis protein 3-2</fullName>
    </alternativeName>
    <domain>
        <recommendedName>
            <fullName evidence="2">Molybdopterin-synthase adenylyltransferase 2</fullName>
            <ecNumber evidence="2">2.7.7.80</ecNumber>
        </recommendedName>
        <alternativeName>
            <fullName evidence="2">Adenylyltransferase MOCS3-2</fullName>
        </alternativeName>
        <alternativeName>
            <fullName evidence="2">Sulfur carrier protein MOCS2A adenylyltransferase 2</fullName>
        </alternativeName>
    </domain>
    <domain>
        <recommendedName>
            <fullName evidence="2">Molybdopterin-synthase sulfurtransferase 2</fullName>
            <ecNumber evidence="2">2.8.1.11</ecNumber>
        </recommendedName>
        <alternativeName>
            <fullName evidence="2">Sulfur carrier protein MOCS2A sulfurtransferase 2</fullName>
        </alternativeName>
        <alternativeName>
            <fullName evidence="2">Sulfurtransferase MOCS3-2</fullName>
        </alternativeName>
    </domain>
</protein>
<accession>Q29PG5</accession>
<gene>
    <name type="ORF">GA12041</name>
</gene>